<accession>P22956</accession>
<accession>P22957</accession>
<accession>Q86156</accession>
<accession>Q86157</accession>
<name>RDRP_RCNMV</name>
<organismHost>
    <name type="scientific">Medicago sativa</name>
    <name type="common">Alfalfa</name>
    <dbReference type="NCBI Taxonomy" id="3879"/>
</organismHost>
<organismHost>
    <name type="scientific">Melilotus officinalis</name>
    <name type="common">Yellow sweet clover</name>
    <name type="synonym">Trifolium officinale</name>
    <dbReference type="NCBI Taxonomy" id="47083"/>
</organismHost>
<organismHost>
    <name type="scientific">Trifolium pratense</name>
    <name type="common">Red clover</name>
    <dbReference type="NCBI Taxonomy" id="57577"/>
</organismHost>
<organismHost>
    <name type="scientific">Trifolium repens</name>
    <name type="common">Creeping white clover</name>
    <dbReference type="NCBI Taxonomy" id="3899"/>
</organismHost>
<protein>
    <recommendedName>
        <fullName>RNA-directed RNA polymerase</fullName>
        <ecNumber>2.7.7.48</ecNumber>
    </recommendedName>
    <alternativeName>
        <fullName>Protein p88</fullName>
    </alternativeName>
</protein>
<proteinExistence type="evidence at protein level"/>
<dbReference type="EC" id="2.7.7.48"/>
<dbReference type="EMBL" id="J04357">
    <property type="protein sequence ID" value="AAB02539.1"/>
    <property type="molecule type" value="Genomic_RNA"/>
</dbReference>
<dbReference type="EMBL" id="J04357">
    <property type="protein sequence ID" value="AAB02540.2"/>
    <property type="molecule type" value="Genomic_RNA"/>
</dbReference>
<dbReference type="EMBL" id="J04357">
    <property type="protein sequence ID" value="AAB02541.1"/>
    <property type="status" value="ALT_SEQ"/>
    <property type="molecule type" value="Genomic_RNA"/>
</dbReference>
<dbReference type="PIR" id="T10779">
    <property type="entry name" value="B43684"/>
</dbReference>
<dbReference type="RefSeq" id="NP_620523.2">
    <molecule id="P22956-1"/>
    <property type="nucleotide sequence ID" value="NC_003756.1"/>
</dbReference>
<dbReference type="RefSeq" id="NP_620524.1">
    <molecule id="P22956-2"/>
    <property type="nucleotide sequence ID" value="NC_003756.1"/>
</dbReference>
<dbReference type="RefSeq" id="NP_620525.1">
    <property type="nucleotide sequence ID" value="NC_003756.1"/>
</dbReference>
<dbReference type="KEGG" id="vg:956630"/>
<dbReference type="KEGG" id="vg:956631"/>
<dbReference type="KEGG" id="vg:956632"/>
<dbReference type="OrthoDB" id="12338at10239"/>
<dbReference type="Proteomes" id="UP000008651">
    <property type="component" value="Genome"/>
</dbReference>
<dbReference type="GO" id="GO:0044167">
    <property type="term" value="C:host cell endoplasmic reticulum membrane"/>
    <property type="evidence" value="ECO:0007669"/>
    <property type="project" value="UniProtKB-SubCell"/>
</dbReference>
<dbReference type="GO" id="GO:0016020">
    <property type="term" value="C:membrane"/>
    <property type="evidence" value="ECO:0007669"/>
    <property type="project" value="UniProtKB-KW"/>
</dbReference>
<dbReference type="GO" id="GO:0000166">
    <property type="term" value="F:nucleotide binding"/>
    <property type="evidence" value="ECO:0007669"/>
    <property type="project" value="UniProtKB-KW"/>
</dbReference>
<dbReference type="GO" id="GO:0003723">
    <property type="term" value="F:RNA binding"/>
    <property type="evidence" value="ECO:0007669"/>
    <property type="project" value="InterPro"/>
</dbReference>
<dbReference type="GO" id="GO:0003968">
    <property type="term" value="F:RNA-directed RNA polymerase activity"/>
    <property type="evidence" value="ECO:0007669"/>
    <property type="project" value="UniProtKB-KW"/>
</dbReference>
<dbReference type="GO" id="GO:0052170">
    <property type="term" value="P:symbiont-mediated suppression of host innate immune response"/>
    <property type="evidence" value="ECO:0007669"/>
    <property type="project" value="UniProtKB-KW"/>
</dbReference>
<dbReference type="GO" id="GO:0039694">
    <property type="term" value="P:viral RNA genome replication"/>
    <property type="evidence" value="ECO:0007669"/>
    <property type="project" value="InterPro"/>
</dbReference>
<dbReference type="GO" id="GO:0075523">
    <property type="term" value="P:viral translational frameshifting"/>
    <property type="evidence" value="ECO:0007669"/>
    <property type="project" value="UniProtKB-KW"/>
</dbReference>
<dbReference type="CDD" id="cd23235">
    <property type="entry name" value="Regressovirinae_RdRp"/>
    <property type="match status" value="1"/>
</dbReference>
<dbReference type="Gene3D" id="3.30.70.270">
    <property type="match status" value="1"/>
</dbReference>
<dbReference type="InterPro" id="IPR043502">
    <property type="entry name" value="DNA/RNA_pol_sf"/>
</dbReference>
<dbReference type="InterPro" id="IPR043128">
    <property type="entry name" value="Rev_trsase/Diguanyl_cyclase"/>
</dbReference>
<dbReference type="InterPro" id="IPR007094">
    <property type="entry name" value="RNA-dir_pol_PSvirus"/>
</dbReference>
<dbReference type="InterPro" id="IPR002166">
    <property type="entry name" value="RNA_pol_HCV"/>
</dbReference>
<dbReference type="Pfam" id="PF00998">
    <property type="entry name" value="RdRP_3"/>
    <property type="match status" value="1"/>
</dbReference>
<dbReference type="SUPFAM" id="SSF56672">
    <property type="entry name" value="DNA/RNA polymerases"/>
    <property type="match status" value="1"/>
</dbReference>
<dbReference type="PROSITE" id="PS50507">
    <property type="entry name" value="RDRP_SSRNA_POS"/>
    <property type="match status" value="1"/>
</dbReference>
<keyword id="KW-1038">Host endoplasmic reticulum</keyword>
<keyword id="KW-1043">Host membrane</keyword>
<keyword id="KW-0945">Host-virus interaction</keyword>
<keyword id="KW-1090">Inhibition of host innate immune response by virus</keyword>
<keyword id="KW-0472">Membrane</keyword>
<keyword id="KW-0547">Nucleotide-binding</keyword>
<keyword id="KW-0548">Nucleotidyltransferase</keyword>
<keyword id="KW-1185">Reference proteome</keyword>
<keyword id="KW-0688">Ribosomal frameshifting</keyword>
<keyword id="KW-0696">RNA-directed RNA polymerase</keyword>
<keyword id="KW-0941">Suppressor of RNA silencing</keyword>
<keyword id="KW-0808">Transferase</keyword>
<keyword id="KW-0899">Viral immunoevasion</keyword>
<keyword id="KW-0693">Viral RNA replication</keyword>
<sequence>MGFINLSLFDVDKLMVWVSKFNPGKILSAICNLGIDCWNRFRKWFFGLNFDAHMWAVDAFIPLMPHYTEQMERVVDDFCSETPESKLEDCLELDTSVNEFFDEEVYKKDEEGVMKLQRSAARKHIKRVRPGMMQAAIKAVETRIRNRHTIFGDDMGKVDEAAVRATASDICGEFKINEHHTNALVYAAAYLAMTPDQRSIDSVKLAYNPKSQARRTLVSAIRENKAVAGFKSLEDFLGGPLSFPVEDAPYPILGIPEIRVAEKRASRVMKSKRVVGLPAVSAGLKVCVHQTSLHNMIVSLERRVFRVKNSAGELVVPPKPIQNAFDSISYFREEWLRKLSHKGQILKSSLADVVACYSSEKRKLYQKAADSLEKKPVQWRDSKVQAFIKVEKLECDTKDPVPRTIQPRSKRYNLAIGQYLRLNEKKMLDSIDDVFKEKTVLSGLDNRAQGRAIAHKWRKYQNPIGIGLDASRFDQHCSVDALKFEQTFYKACFPGDQQLETLLKWQLSNTGSALLPTGELVRYRTKGCRMSGDINTGLGNKILMCSMVHAFLKETGVRASLANNGDDCVLFCEKGDYEQINRNLEQWFLCRGFEMTVEKPVDVLEKVAFCRSQPVCIATQWAMVRQLGSLSRDCFSTQDWLNPKTFKDAMNALGQCNGIINDGVPIHMAQAKLMHRIGGNRKFNLDALHKQMEYSWRDRLGKRTNLLWSEVEDATRLSYFRAFGIEPYIQRIVEEYFSQVEITCEGRSTNVLPTHYSRIHKDLIKAR</sequence>
<comment type="function">
    <text evidence="3 4 5 6 7 8 10">RNA-dependent RNA polymerase, made of isoforms p88 and p27, plays an essential role in the replication of the bipartite viral genome composed of RNA-1 and RNA-2. Replicase proteins p88 and p27 interact together and selectively recruit viral replication templates as well as other essential components into intracellular membranes for the assembly of the 480 kDa viral replicase complex. Mechanistically, isoform protein p27 binds to the Y-shaped RNA element (YRE) located in the 3' UTR of RNA2 via a direct RNA-protein interaction and to RNA1 in a translation-coupled manner. This RNA-binding activity allows RNA2 recruitment to host membranes. The viral replicase complex synthesizes the dsRNA genome from the genomic ssRNA(+). It recognizes internal subgenomic promoters on the negative-sense RNA to transcribe the 3' co-terminal subgenomic RNAs that will generate the capsid and movement proteins. In addition, the viral replication process requires the trigger of an intracellular ROS burst mediated by p27 recruitment of the host ROS-generating machinery. The viral replicase complex also acts as a suppressor of RNA-mediated gene silencing, known as post-transcriptional gene silencing (PTGS), a mechanism of plant viral defense that limits the accumulation of viral RNAs.</text>
</comment>
<comment type="catalytic activity">
    <reaction evidence="1">
        <text>RNA(n) + a ribonucleoside 5'-triphosphate = RNA(n+1) + diphosphate</text>
        <dbReference type="Rhea" id="RHEA:21248"/>
        <dbReference type="Rhea" id="RHEA-COMP:14527"/>
        <dbReference type="Rhea" id="RHEA-COMP:17342"/>
        <dbReference type="ChEBI" id="CHEBI:33019"/>
        <dbReference type="ChEBI" id="CHEBI:61557"/>
        <dbReference type="ChEBI" id="CHEBI:140395"/>
        <dbReference type="EC" id="2.7.7.48"/>
    </reaction>
</comment>
<comment type="subunit">
    <molecule>RNA-directed RNA polymerase</molecule>
    <text evidence="2 3">Interacts with protein p27 (via C-terminus) (PubMed:15016550, PubMed:20375154).</text>
</comment>
<comment type="subunit">
    <molecule>Isoform protein p27</molecule>
    <text evidence="2 8 9 10">Forms homooligomers (PubMed:15016550, PubMed:20375154). interacts with host NbRACK1; this interaction is required for efficient viral replication (PubMed:30169907). interacts with host NbRBOHB; this interaction triggers an intracellular ROS burst, important for viral replication (PubMed:28154139). Interacts with host ARF1; this interaction is required for the assembly of the viral replicase complex (PubMed:23097452).</text>
</comment>
<comment type="subcellular location">
    <molecule>Isoform RNA-directed RNA polymerase p88</molecule>
    <subcellularLocation>
        <location evidence="2 8">Host endoplasmic reticulum membrane</location>
    </subcellularLocation>
</comment>
<comment type="subcellular location">
    <molecule>Isoform protein p27</molecule>
    <subcellularLocation>
        <location evidence="2 7 8 9 10">Host endoplasmic reticulum membrane</location>
    </subcellularLocation>
    <text evidence="7">Associates with intracellular membranes via membrane-association domain in the N-terminal region. Membrane association is essential for RNA replication complex formation.</text>
</comment>
<comment type="alternative products">
    <event type="ribosomal frameshifting"/>
    <isoform>
        <id>P22956-1</id>
        <name>RNA-directed RNA polymerase p88</name>
        <name>88 kDa protein</name>
        <sequence type="displayed"/>
    </isoform>
    <isoform>
        <id>P22956-2</id>
        <name>protein p27</name>
        <sequence type="described" ref="VSP_032886"/>
    </isoform>
</comment>
<comment type="miscellaneous">
    <molecule>Isoform RNA-directed RNA polymerase p88</molecule>
    <text>Produced by ribosomal frameshifting between codons 236 and 237.</text>
</comment>
<comment type="miscellaneous">
    <molecule>Isoform protein p27</molecule>
    <text evidence="11">Produced by conventional translation.</text>
</comment>
<comment type="similarity">
    <text evidence="11">Belongs to the tombusviridae RNA polymerase family.</text>
</comment>
<comment type="caution">
    <text evidence="11">The 57-kDa protein cited in PubMed:2763465 has only been seen in vitro and is likely not expressed in vivo.</text>
</comment>
<comment type="sequence caution" evidence="11">
    <conflict type="erroneous gene model prediction">
        <sequence resource="EMBL-CDS" id="AAB02541"/>
    </conflict>
</comment>
<feature type="chain" id="PRO_0000040206" description="RNA-directed RNA polymerase">
    <location>
        <begin position="1"/>
        <end position="767"/>
    </location>
</feature>
<feature type="domain" description="RdRp catalytic" evidence="1">
    <location>
        <begin position="463"/>
        <end position="580"/>
    </location>
</feature>
<feature type="splice variant" id="VSP_032886" description="In isoform protein p27." evidence="11">
    <location>
        <begin position="237"/>
        <end position="767"/>
    </location>
</feature>
<feature type="mutagenesis site" description="Complete loss of RNA replication and membrane association." evidence="7">
    <original>W</original>
    <variation>A</variation>
    <location>
        <position position="38"/>
    </location>
</feature>
<feature type="mutagenesis site" description="Complete loss of RNA replication and membrane association." evidence="7">
    <original>F</original>
    <variation>A</variation>
    <location>
        <position position="41"/>
    </location>
</feature>
<feature type="mutagenesis site" description="Complete loss of RNA replication." evidence="7">
    <original>F</original>
    <variation>A</variation>
    <location>
        <position position="45"/>
    </location>
</feature>
<feature type="mutagenesis site" description="Complete loss of RNA replication." evidence="7">
    <original>F</original>
    <variation>A</variation>
    <location>
        <position position="46"/>
    </location>
</feature>
<feature type="mutagenesis site" description="Complete loss of RNA replication." evidence="7">
    <original>L</original>
    <variation>A</variation>
    <location>
        <position position="48"/>
    </location>
</feature>
<feature type="mutagenesis site" description="Complete loss of binding to the Y-shaped RNA element (YRE)." evidence="6">
    <original>R</original>
    <variation>A</variation>
    <location>
        <position position="164"/>
    </location>
</feature>
<feature type="mutagenesis site" description="More than 90% loss of binding to the Y-shaped RNA element (YRE)." evidence="6">
    <original>H</original>
    <variation>A</variation>
    <location>
        <position position="179"/>
    </location>
</feature>
<feature type="mutagenesis site" description="More than 90% loss of binding to the Y-shaped RNA element (YRE)." evidence="6">
    <original>H</original>
    <variation>A</variation>
    <location>
        <position position="180"/>
    </location>
</feature>
<feature type="sequence conflict" description="In Ref. 1; AAB02540." evidence="11" ref="1">
    <location>
        <position position="237"/>
    </location>
</feature>
<organism>
    <name type="scientific">Red clover necrotic mosaic virus</name>
    <name type="common">RCNMV</name>
    <dbReference type="NCBI Taxonomy" id="12267"/>
    <lineage>
        <taxon>Viruses</taxon>
        <taxon>Riboviria</taxon>
        <taxon>Orthornavirae</taxon>
        <taxon>Kitrinoviricota</taxon>
        <taxon>Tolucaviricetes</taxon>
        <taxon>Tolivirales</taxon>
        <taxon>Tombusviridae</taxon>
        <taxon>Regressovirinae</taxon>
        <taxon>Dianthovirus</taxon>
        <taxon>Dianthovirus trifolii</taxon>
    </lineage>
</organism>
<reference key="1">
    <citation type="journal article" date="1989" name="Virology">
        <title>The complete nucleotide sequence and genome organization of red clover necrotic mosaic virus RNA-1.</title>
        <authorList>
            <person name="Xiong Z."/>
            <person name="Lommel S.A."/>
        </authorList>
    </citation>
    <scope>NUCLEOTIDE SEQUENCE [GENOMIC RNA]</scope>
    <source>
        <strain>Australian</strain>
    </source>
</reference>
<reference key="2">
    <citation type="submission" date="2015-05" db="EMBL/GenBank/DDBJ databases">
        <authorList>
            <person name="Xiong Z."/>
            <person name="Lommel S.A."/>
        </authorList>
    </citation>
    <scope>SEQUENCE REVISION</scope>
</reference>
<reference key="3">
    <citation type="journal article" date="1993" name="Virology">
        <title>Synthesis of the putative red clover necrotic mosaic virus RNA polymerase by ribosomal frameshifting in vitro.</title>
        <authorList>
            <person name="Xiong Z."/>
            <person name="Kim K.H."/>
            <person name="Kendall T.L."/>
            <person name="Lommel S.A."/>
        </authorList>
    </citation>
    <scope>RIBOSOMAL FRAMESHIFT</scope>
</reference>
<reference key="4">
    <citation type="journal article" date="2004" name="Virology">
        <title>Red clover necrotic mosaic virus replication proteins accumulate at the endoplasmic reticulum.</title>
        <authorList>
            <person name="Turner K.A."/>
            <person name="Sit T.L."/>
            <person name="Callaway A.S."/>
            <person name="Allen N.S."/>
            <person name="Lommel S.A."/>
        </authorList>
    </citation>
    <scope>SUBCELLULAR LOCATION</scope>
</reference>
<reference key="5">
    <citation type="journal article" date="2005" name="EMBO J.">
        <title>A plant RNA virus suppresses RNA silencing through viral RNA replication.</title>
        <authorList>
            <person name="Takeda A."/>
            <person name="Tsukuda M."/>
            <person name="Mizumoto H."/>
            <person name="Okamoto K."/>
            <person name="Kaido M."/>
            <person name="Mise K."/>
            <person name="Okuno T."/>
        </authorList>
    </citation>
    <scope>FUNCTION</scope>
</reference>
<reference key="6">
    <citation type="journal article" date="2010" name="J. Virol.">
        <title>Identification and characterization of the 480-kilodalton template-specific RNA-dependent RNA polymerase complex of red clover necrotic mosaic virus.</title>
        <authorList>
            <person name="Mine A."/>
            <person name="Takeda A."/>
            <person name="Taniguchi T."/>
            <person name="Taniguchi H."/>
            <person name="Kaido M."/>
            <person name="Mise K."/>
            <person name="Okuno T."/>
        </authorList>
    </citation>
    <scope>SUBUNIT</scope>
    <scope>FUNCTION</scope>
</reference>
<reference key="7">
    <citation type="journal article" date="2010" name="Virology">
        <title>Interactions between p27 and p88 replicase proteins of Red clover necrotic mosaic virus play an essential role in viral RNA replication and suppression of RNA silencing via the 480-kDa viral replicase complex assembly.</title>
        <authorList>
            <person name="Mine A."/>
            <person name="Hyodo K."/>
            <person name="Takeda A."/>
            <person name="Kaido M."/>
            <person name="Mise K."/>
            <person name="Okuno T."/>
        </authorList>
    </citation>
    <scope>SUBUNIT</scope>
    <scope>FUNCTION</scope>
</reference>
<reference key="8">
    <citation type="journal article" date="2011" name="Virology">
        <title>Identification of amino acids in auxiliary replicase protein p27 critical for its RNA-binding activity and the assembly of the replicase complex in Red clover necrotic mosaic virus.</title>
        <authorList>
            <person name="Hyodo K."/>
            <person name="Mine A."/>
            <person name="Iwakawa H.O."/>
            <person name="Kaido M."/>
            <person name="Mise K."/>
            <person name="Okuno T."/>
        </authorList>
    </citation>
    <scope>FUNCTION</scope>
    <scope>RNA-BINDING</scope>
    <scope>MUTAGENESIS OF ARG-164; HIS-179 AND HIS-180</scope>
</reference>
<reference key="9">
    <citation type="journal article" date="2011" name="J. Virol.">
        <title>Template recognition mechanisms by replicase proteins differ between bipartite positive-strand genomic RNAs of a plant virus.</title>
        <authorList>
            <person name="Iwakawa H.O."/>
            <person name="Mine A."/>
            <person name="Hyodo K."/>
            <person name="An M."/>
            <person name="Kaido M."/>
            <person name="Mise K."/>
            <person name="Okuno T."/>
        </authorList>
    </citation>
    <scope>FUNCTION</scope>
    <scope>RNA-BINDING</scope>
</reference>
<reference key="10">
    <citation type="journal article" date="2012" name="Virology">
        <title>Identification of domains in p27 auxiliary replicase protein essential for its association with the endoplasmic reticulum membranes in Red clover necrotic mosaic virus.</title>
        <authorList>
            <person name="Kusumanegara K."/>
            <person name="Mine A."/>
            <person name="Hyodo K."/>
            <person name="Kaido M."/>
            <person name="Mise K."/>
            <person name="Okuno T."/>
        </authorList>
    </citation>
    <scope>FUNCTION</scope>
    <scope>SUBCELLULAR LOCATION</scope>
    <scope>MUTAGENESIS OF TRP-38; PHE-41; PHE-45; PHE-46 AND LEU-48</scope>
</reference>
<reference key="11">
    <citation type="journal article" date="2013" name="J. Virol.">
        <title>ADP ribosylation factor 1 plays an essential role in the replication of a plant RNA virus.</title>
        <authorList>
            <person name="Hyodo K."/>
            <person name="Mine A."/>
            <person name="Taniguchi T."/>
            <person name="Kaido M."/>
            <person name="Mise K."/>
            <person name="Taniguchi H."/>
            <person name="Okuno T."/>
        </authorList>
    </citation>
    <scope>FUNCTION</scope>
    <scope>INTERACTION WITH HOST ARF1</scope>
    <scope>SUBCELLULAR LOCATION</scope>
</reference>
<reference key="12">
    <citation type="journal article" date="2017" name="Proc. Natl. Acad. Sci. U.S.A.">
        <title>Harnessing host ROS-generating machinery for the robust genome replication of a plant RNA virus.</title>
        <authorList>
            <person name="Hyodo K."/>
            <person name="Hashimoto K."/>
            <person name="Kuchitsu K."/>
            <person name="Suzuki N."/>
            <person name="Okuno T."/>
        </authorList>
    </citation>
    <scope>FUNCTION</scope>
    <scope>INTERACTION WITH HOST NBRBOHB</scope>
    <scope>SUBCELLULAR LOCATION</scope>
</reference>
<reference key="13">
    <citation type="journal article" date="2019" name="New Phytol.">
        <title>Hijacking a host scaffold protein, RACK1, for replication of a plant RNA virus.</title>
        <authorList>
            <person name="Hyodo K."/>
            <person name="Suzuki N."/>
            <person name="Okuno T."/>
        </authorList>
    </citation>
    <scope>FUNCTION</scope>
    <scope>SUBCELLULAR LOCATION</scope>
    <scope>INTERACTION WITH HOST NBRACK1</scope>
</reference>
<gene>
    <name type="ORF">ORF1</name>
</gene>
<evidence type="ECO:0000255" key="1">
    <source>
        <dbReference type="PROSITE-ProRule" id="PRU00539"/>
    </source>
</evidence>
<evidence type="ECO:0000269" key="2">
    <source>
    </source>
</evidence>
<evidence type="ECO:0000269" key="3">
    <source>
    </source>
</evidence>
<evidence type="ECO:0000269" key="4">
    <source>
    </source>
</evidence>
<evidence type="ECO:0000269" key="5">
    <source>
    </source>
</evidence>
<evidence type="ECO:0000269" key="6">
    <source>
    </source>
</evidence>
<evidence type="ECO:0000269" key="7">
    <source>
    </source>
</evidence>
<evidence type="ECO:0000269" key="8">
    <source>
    </source>
</evidence>
<evidence type="ECO:0000269" key="9">
    <source>
    </source>
</evidence>
<evidence type="ECO:0000269" key="10">
    <source>
    </source>
</evidence>
<evidence type="ECO:0000305" key="11"/>